<organism>
    <name type="scientific">Acinetobacter baumannii (strain AB307-0294)</name>
    <dbReference type="NCBI Taxonomy" id="557600"/>
    <lineage>
        <taxon>Bacteria</taxon>
        <taxon>Pseudomonadati</taxon>
        <taxon>Pseudomonadota</taxon>
        <taxon>Gammaproteobacteria</taxon>
        <taxon>Moraxellales</taxon>
        <taxon>Moraxellaceae</taxon>
        <taxon>Acinetobacter</taxon>
        <taxon>Acinetobacter calcoaceticus/baumannii complex</taxon>
    </lineage>
</organism>
<comment type="catalytic activity">
    <reaction evidence="1">
        <text>tRNA(Gly) + glycine + ATP = glycyl-tRNA(Gly) + AMP + diphosphate</text>
        <dbReference type="Rhea" id="RHEA:16013"/>
        <dbReference type="Rhea" id="RHEA-COMP:9664"/>
        <dbReference type="Rhea" id="RHEA-COMP:9683"/>
        <dbReference type="ChEBI" id="CHEBI:30616"/>
        <dbReference type="ChEBI" id="CHEBI:33019"/>
        <dbReference type="ChEBI" id="CHEBI:57305"/>
        <dbReference type="ChEBI" id="CHEBI:78442"/>
        <dbReference type="ChEBI" id="CHEBI:78522"/>
        <dbReference type="ChEBI" id="CHEBI:456215"/>
        <dbReference type="EC" id="6.1.1.14"/>
    </reaction>
</comment>
<comment type="subunit">
    <text evidence="1">Tetramer of two alpha and two beta subunits.</text>
</comment>
<comment type="subcellular location">
    <subcellularLocation>
        <location evidence="1">Cytoplasm</location>
    </subcellularLocation>
</comment>
<comment type="similarity">
    <text evidence="1">Belongs to the class-II aminoacyl-tRNA synthetase family.</text>
</comment>
<proteinExistence type="inferred from homology"/>
<protein>
    <recommendedName>
        <fullName evidence="1">Glycine--tRNA ligase beta subunit</fullName>
        <ecNumber evidence="1">6.1.1.14</ecNumber>
    </recommendedName>
    <alternativeName>
        <fullName evidence="1">Glycyl-tRNA synthetase beta subunit</fullName>
        <shortName evidence="1">GlyRS</shortName>
    </alternativeName>
</protein>
<name>SYGB_ACIB3</name>
<accession>B7GVW2</accession>
<dbReference type="EC" id="6.1.1.14" evidence="1"/>
<dbReference type="EMBL" id="CP001172">
    <property type="protein sequence ID" value="ACJ58770.1"/>
    <property type="molecule type" value="Genomic_DNA"/>
</dbReference>
<dbReference type="RefSeq" id="WP_000033906.1">
    <property type="nucleotide sequence ID" value="NZ_CP001172.1"/>
</dbReference>
<dbReference type="SMR" id="B7GVW2"/>
<dbReference type="HOGENOM" id="CLU_007220_2_2_6"/>
<dbReference type="Proteomes" id="UP000006924">
    <property type="component" value="Chromosome"/>
</dbReference>
<dbReference type="GO" id="GO:0005829">
    <property type="term" value="C:cytosol"/>
    <property type="evidence" value="ECO:0007669"/>
    <property type="project" value="TreeGrafter"/>
</dbReference>
<dbReference type="GO" id="GO:0004814">
    <property type="term" value="F:arginine-tRNA ligase activity"/>
    <property type="evidence" value="ECO:0007669"/>
    <property type="project" value="InterPro"/>
</dbReference>
<dbReference type="GO" id="GO:0005524">
    <property type="term" value="F:ATP binding"/>
    <property type="evidence" value="ECO:0007669"/>
    <property type="project" value="UniProtKB-UniRule"/>
</dbReference>
<dbReference type="GO" id="GO:0004820">
    <property type="term" value="F:glycine-tRNA ligase activity"/>
    <property type="evidence" value="ECO:0007669"/>
    <property type="project" value="UniProtKB-UniRule"/>
</dbReference>
<dbReference type="GO" id="GO:0006420">
    <property type="term" value="P:arginyl-tRNA aminoacylation"/>
    <property type="evidence" value="ECO:0007669"/>
    <property type="project" value="InterPro"/>
</dbReference>
<dbReference type="GO" id="GO:0006426">
    <property type="term" value="P:glycyl-tRNA aminoacylation"/>
    <property type="evidence" value="ECO:0007669"/>
    <property type="project" value="UniProtKB-UniRule"/>
</dbReference>
<dbReference type="HAMAP" id="MF_00255">
    <property type="entry name" value="Gly_tRNA_synth_beta"/>
    <property type="match status" value="1"/>
</dbReference>
<dbReference type="InterPro" id="IPR008909">
    <property type="entry name" value="DALR_anticod-bd"/>
</dbReference>
<dbReference type="InterPro" id="IPR015944">
    <property type="entry name" value="Gly-tRNA-synth_bsu"/>
</dbReference>
<dbReference type="InterPro" id="IPR006194">
    <property type="entry name" value="Gly-tRNA-synth_heterodimer"/>
</dbReference>
<dbReference type="NCBIfam" id="TIGR00211">
    <property type="entry name" value="glyS"/>
    <property type="match status" value="1"/>
</dbReference>
<dbReference type="PANTHER" id="PTHR30075:SF2">
    <property type="entry name" value="GLYCINE--TRNA LIGASE, CHLOROPLASTIC_MITOCHONDRIAL 2"/>
    <property type="match status" value="1"/>
</dbReference>
<dbReference type="PANTHER" id="PTHR30075">
    <property type="entry name" value="GLYCYL-TRNA SYNTHETASE"/>
    <property type="match status" value="1"/>
</dbReference>
<dbReference type="Pfam" id="PF05746">
    <property type="entry name" value="DALR_1"/>
    <property type="match status" value="1"/>
</dbReference>
<dbReference type="Pfam" id="PF02092">
    <property type="entry name" value="tRNA_synt_2f"/>
    <property type="match status" value="1"/>
</dbReference>
<dbReference type="PRINTS" id="PR01045">
    <property type="entry name" value="TRNASYNTHGB"/>
</dbReference>
<dbReference type="SUPFAM" id="SSF109604">
    <property type="entry name" value="HD-domain/PDEase-like"/>
    <property type="match status" value="1"/>
</dbReference>
<dbReference type="PROSITE" id="PS50861">
    <property type="entry name" value="AA_TRNA_LIGASE_II_GLYAB"/>
    <property type="match status" value="1"/>
</dbReference>
<feature type="chain" id="PRO_1000197165" description="Glycine--tRNA ligase beta subunit">
    <location>
        <begin position="1"/>
        <end position="689"/>
    </location>
</feature>
<keyword id="KW-0030">Aminoacyl-tRNA synthetase</keyword>
<keyword id="KW-0067">ATP-binding</keyword>
<keyword id="KW-0963">Cytoplasm</keyword>
<keyword id="KW-0436">Ligase</keyword>
<keyword id="KW-0547">Nucleotide-binding</keyword>
<keyword id="KW-0648">Protein biosynthesis</keyword>
<sequence length="689" mass="75052">MSKHTVLFELGCEELPPKSLKTLRDALQAETVKGLNEAGLNFASVEAYAAPRRLALKIVDVDAAQADTQKRFDGPAVQAAYDAEGKPTKALEGFMRGQGITVEQLSTFQAGKVEKVCYLKDVKGQSLDTLLPQILQTALDNLPIAKRMRSAASRTEFVRPVKWVVLLKDDQVIEATIQDHKAGNVTYGHRFHAPEAVTLAHANDYLAALEKAYVVANFEKRQATIQEQVKKLADEVNATAIVPADLLDEVTSLVEWPVALRATFEERYLAVPQEALITTMQDNQKYFCLINAEGKLQPYFITVSNIESKDPTQIIEGNEKVVRPRLSDAEFFFLQDQKQPLASRKEKLANMVFQAQLGTLWDKSTRIAKLAVALSSITGANPADAEKAALLAKCDLTSELVGEFPELQGIAGTYYARIEGENTEVSEALGEQYLPKFAGDVLPKTKTGTTIALSDRLDTLVGIFGIGQAPTGSKDPFALRRSAIGILRLIIENELDVTIEELVNLALQGYGDIVKDHDKTRADAVAFLEGRYRAKYEDQGVAVDVLQAVQALAPKSPLDFDKRVNAVNHFRTLPEAAALAAANKRVANILAKEATPEGSVVEANLVEDAEKALFAELQAVTPVVEPLLAAKDYTAALSKLAALRAPIDAFFDGVMVMADDAGLKANRLRLLAQLRNLFTAVADVSVLQG</sequence>
<gene>
    <name evidence="1" type="primary">glyS</name>
    <name type="ordered locus">ABBFA_000392</name>
</gene>
<evidence type="ECO:0000255" key="1">
    <source>
        <dbReference type="HAMAP-Rule" id="MF_00255"/>
    </source>
</evidence>
<reference key="1">
    <citation type="journal article" date="2008" name="J. Bacteriol.">
        <title>Comparative genome sequence analysis of multidrug-resistant Acinetobacter baumannii.</title>
        <authorList>
            <person name="Adams M.D."/>
            <person name="Goglin K."/>
            <person name="Molyneaux N."/>
            <person name="Hujer K.M."/>
            <person name="Lavender H."/>
            <person name="Jamison J.J."/>
            <person name="MacDonald I.J."/>
            <person name="Martin K.M."/>
            <person name="Russo T."/>
            <person name="Campagnari A.A."/>
            <person name="Hujer A.M."/>
            <person name="Bonomo R.A."/>
            <person name="Gill S.R."/>
        </authorList>
    </citation>
    <scope>NUCLEOTIDE SEQUENCE [LARGE SCALE GENOMIC DNA]</scope>
    <source>
        <strain>AB307-0294</strain>
    </source>
</reference>